<dbReference type="EC" id="3.1.12.1" evidence="1"/>
<dbReference type="EMBL" id="CP000439">
    <property type="protein sequence ID" value="ABK89651.1"/>
    <property type="molecule type" value="Genomic_DNA"/>
</dbReference>
<dbReference type="SMR" id="A0Q5Y6"/>
<dbReference type="KEGG" id="ftn:FTN_0760"/>
<dbReference type="BioCyc" id="FTUL401614:G1G75-792-MONOMER"/>
<dbReference type="Proteomes" id="UP000000762">
    <property type="component" value="Chromosome"/>
</dbReference>
<dbReference type="GO" id="GO:0004527">
    <property type="term" value="F:exonuclease activity"/>
    <property type="evidence" value="ECO:0007669"/>
    <property type="project" value="UniProtKB-KW"/>
</dbReference>
<dbReference type="GO" id="GO:0051536">
    <property type="term" value="F:iron-sulfur cluster binding"/>
    <property type="evidence" value="ECO:0007669"/>
    <property type="project" value="UniProtKB-KW"/>
</dbReference>
<dbReference type="GO" id="GO:0046872">
    <property type="term" value="F:metal ion binding"/>
    <property type="evidence" value="ECO:0007669"/>
    <property type="project" value="UniProtKB-KW"/>
</dbReference>
<dbReference type="GO" id="GO:0051607">
    <property type="term" value="P:defense response to virus"/>
    <property type="evidence" value="ECO:0007669"/>
    <property type="project" value="UniProtKB-KW"/>
</dbReference>
<dbReference type="Gene3D" id="3.90.320.10">
    <property type="match status" value="1"/>
</dbReference>
<dbReference type="InterPro" id="IPR051827">
    <property type="entry name" value="Cas4_exonuclease"/>
</dbReference>
<dbReference type="InterPro" id="IPR013343">
    <property type="entry name" value="CRISPR-assoc_prot_Cas4"/>
</dbReference>
<dbReference type="InterPro" id="IPR022765">
    <property type="entry name" value="Dna2/Cas4_DUF83"/>
</dbReference>
<dbReference type="InterPro" id="IPR011604">
    <property type="entry name" value="PDDEXK-like_dom_sf"/>
</dbReference>
<dbReference type="InterPro" id="IPR011335">
    <property type="entry name" value="Restrct_endonuc-II-like"/>
</dbReference>
<dbReference type="NCBIfam" id="TIGR00372">
    <property type="entry name" value="cas4"/>
    <property type="match status" value="1"/>
</dbReference>
<dbReference type="PANTHER" id="PTHR36531">
    <property type="entry name" value="CRISPR-ASSOCIATED EXONUCLEASE CAS4"/>
    <property type="match status" value="1"/>
</dbReference>
<dbReference type="PANTHER" id="PTHR36531:SF6">
    <property type="entry name" value="DNA REPLICATION ATP-DEPENDENT HELICASE_NUCLEASE DNA2"/>
    <property type="match status" value="1"/>
</dbReference>
<dbReference type="Pfam" id="PF01930">
    <property type="entry name" value="Cas_Cas4"/>
    <property type="match status" value="1"/>
</dbReference>
<dbReference type="SUPFAM" id="SSF52980">
    <property type="entry name" value="Restriction endonuclease-like"/>
    <property type="match status" value="1"/>
</dbReference>
<accession>A0Q5Y6</accession>
<name>CAS4_FRATN</name>
<feature type="chain" id="PRO_0000436106" description="CRISPR-associated exonuclease Cas4">
    <location>
        <begin position="1"/>
        <end position="196"/>
    </location>
</feature>
<feature type="binding site" evidence="1">
    <location>
        <position position="23"/>
    </location>
    <ligand>
        <name>[4Fe-4S] cluster</name>
        <dbReference type="ChEBI" id="CHEBI:49883"/>
    </ligand>
</feature>
<feature type="binding site" evidence="1">
    <location>
        <position position="50"/>
    </location>
    <ligand>
        <name>Mn(2+)</name>
        <dbReference type="ChEBI" id="CHEBI:29035"/>
    </ligand>
</feature>
<feature type="binding site" evidence="1">
    <location>
        <position position="90"/>
    </location>
    <ligand>
        <name>Mn(2+)</name>
        <dbReference type="ChEBI" id="CHEBI:29035"/>
    </ligand>
</feature>
<feature type="binding site" evidence="1">
    <location>
        <position position="103"/>
    </location>
    <ligand>
        <name>Mn(2+)</name>
        <dbReference type="ChEBI" id="CHEBI:29035"/>
    </ligand>
</feature>
<feature type="binding site" evidence="1">
    <location>
        <position position="184"/>
    </location>
    <ligand>
        <name>[4Fe-4S] cluster</name>
        <dbReference type="ChEBI" id="CHEBI:49883"/>
    </ligand>
</feature>
<feature type="binding site" evidence="1">
    <location>
        <position position="187"/>
    </location>
    <ligand>
        <name>[4Fe-4S] cluster</name>
        <dbReference type="ChEBI" id="CHEBI:49883"/>
    </ligand>
</feature>
<feature type="binding site" evidence="1">
    <location>
        <position position="193"/>
    </location>
    <ligand>
        <name>[4Fe-4S] cluster</name>
        <dbReference type="ChEBI" id="CHEBI:49883"/>
    </ligand>
</feature>
<protein>
    <recommendedName>
        <fullName>CRISPR-associated exonuclease Cas4</fullName>
        <ecNumber evidence="1">3.1.12.1</ecNumber>
    </recommendedName>
</protein>
<sequence>MNMDIFDNDLSIPVNLIRQWCFCPRIVYYQELLAIKPNKPLWVAQGEEFHKKVEQLEKRRSFSRYGLENAIRHFNLSIKSQKYKLHGIVDWVIETDTNVYVVEYKTNPNPNSLGHKLQIAAYALLVQEYFAKPCKTTFLTSDKKSYEIKITDELINKLIKTISDILSTLDSGNKPDSSASDHQCIQCEYYNFCNDR</sequence>
<gene>
    <name evidence="3" type="primary">cas4</name>
    <name type="ordered locus">FTN_0760</name>
</gene>
<proteinExistence type="evidence at transcript level"/>
<evidence type="ECO:0000250" key="1">
    <source>
        <dbReference type="UniProtKB" id="Q97TX9"/>
    </source>
</evidence>
<evidence type="ECO:0000269" key="2">
    <source>
    </source>
</evidence>
<evidence type="ECO:0000303" key="3">
    <source>
    </source>
</evidence>
<evidence type="ECO:0000305" key="4"/>
<evidence type="ECO:0000305" key="5">
    <source>
    </source>
</evidence>
<reference key="1">
    <citation type="journal article" date="2007" name="Genome Biol.">
        <title>Comparison of Francisella tularensis genomes reveals evolutionary events associated with the emergence of human pathogenic strains.</title>
        <authorList>
            <person name="Rohmer L."/>
            <person name="Fong C."/>
            <person name="Abmayr S."/>
            <person name="Wasnick M."/>
            <person name="Larson Freeman T.J."/>
            <person name="Radey M."/>
            <person name="Guina T."/>
            <person name="Svensson K."/>
            <person name="Hayden H.S."/>
            <person name="Jacobs M."/>
            <person name="Gallagher L.A."/>
            <person name="Manoil C."/>
            <person name="Ernst R.K."/>
            <person name="Drees B."/>
            <person name="Buckley D."/>
            <person name="Haugen E."/>
            <person name="Bovee D."/>
            <person name="Zhou Y."/>
            <person name="Chang J."/>
            <person name="Levy R."/>
            <person name="Lim R."/>
            <person name="Gillett W."/>
            <person name="Guenthener D."/>
            <person name="Kang A."/>
            <person name="Shaffer S.A."/>
            <person name="Taylor G."/>
            <person name="Chen J."/>
            <person name="Gallis B."/>
            <person name="D'Argenio D.A."/>
            <person name="Forsman M."/>
            <person name="Olson M.V."/>
            <person name="Goodlett D.R."/>
            <person name="Kaul R."/>
            <person name="Miller S.I."/>
            <person name="Brittnacher M.J."/>
        </authorList>
    </citation>
    <scope>NUCLEOTIDE SEQUENCE [LARGE SCALE GENOMIC DNA]</scope>
    <source>
        <strain>U112</strain>
    </source>
</reference>
<reference key="2">
    <citation type="journal article" date="2013" name="Nature">
        <title>A CRISPR/Cas system mediates bacterial innate immune evasion and virulence.</title>
        <authorList>
            <person name="Sampson T.R."/>
            <person name="Saroj S.D."/>
            <person name="Llewellyn A.C."/>
            <person name="Tzeng Y.L."/>
            <person name="Weiss D.S."/>
        </authorList>
    </citation>
    <scope>INDUCTION</scope>
    <scope>DISRUPTION PHENOTYPE</scope>
    <source>
        <strain>U112</strain>
    </source>
</reference>
<reference key="3">
    <citation type="journal article" date="2013" name="Nature">
        <authorList>
            <person name="Sampson T.R."/>
            <person name="Saroj S.D."/>
            <person name="Llewellyn A.C."/>
            <person name="Tzeng Y.L."/>
            <person name="Weiss D.S."/>
        </authorList>
    </citation>
    <scope>ERRATUM OF PUBMED:23584588</scope>
</reference>
<keyword id="KW-0051">Antiviral defense</keyword>
<keyword id="KW-0269">Exonuclease</keyword>
<keyword id="KW-0378">Hydrolase</keyword>
<keyword id="KW-0408">Iron</keyword>
<keyword id="KW-0411">Iron-sulfur</keyword>
<keyword id="KW-0464">Manganese</keyword>
<keyword id="KW-0479">Metal-binding</keyword>
<keyword id="KW-0540">Nuclease</keyword>
<organism>
    <name type="scientific">Francisella tularensis subsp. novicida (strain U112)</name>
    <dbReference type="NCBI Taxonomy" id="401614"/>
    <lineage>
        <taxon>Bacteria</taxon>
        <taxon>Pseudomonadati</taxon>
        <taxon>Pseudomonadota</taxon>
        <taxon>Gammaproteobacteria</taxon>
        <taxon>Thiotrichales</taxon>
        <taxon>Francisellaceae</taxon>
        <taxon>Francisella</taxon>
    </lineage>
</organism>
<comment type="function">
    <text evidence="1">CRISPR (clustered regularly interspaced short palindromic repeat) is an adaptive immune system that provides protection against mobile genetic elements (viruses, transposable elements and conjugative plasmids). CRISPR clusters contain sequences complementary to antecedent mobile elements and target invading nucleic acids. CRISPR clusters are transcribed and processed into CRISPR RNA (crRNA). This may be a 5' to 3' ssDNA exonuclease (By similarity).</text>
</comment>
<comment type="catalytic activity">
    <reaction evidence="1">
        <text>exonucleolytic cleavage in the 5'- to 3'-direction to yield nucleoside 3'-phosphates.</text>
        <dbReference type="EC" id="3.1.12.1"/>
    </reaction>
</comment>
<comment type="cofactor">
    <cofactor evidence="1">
        <name>Mg(2+)</name>
        <dbReference type="ChEBI" id="CHEBI:18420"/>
    </cofactor>
    <text evidence="1">Mg(2+) or Mn(2+) required for ssDNA cleavage activity.</text>
</comment>
<comment type="cofactor">
    <cofactor evidence="1">
        <name>[4Fe-4S] cluster</name>
        <dbReference type="ChEBI" id="CHEBI:49883"/>
    </cofactor>
    <text evidence="1">Binds 1 [4Fe-4S] cluster per subunit. It may be important for protein stability, since mutation of the Cys that binds the cofactor leads to a colorless, insoluble protein.</text>
</comment>
<comment type="induction">
    <text evidence="2">In culture expression is high during early log phase (1 hour), decreases and then rises again in late stationary phase (16 hours). During infection of mouse bone marrow-derived macrophages (BMDM) expression is maximal after 2 hours, when the bacteria is expected to be in the phagosome.</text>
</comment>
<comment type="disruption phenotype">
    <text evidence="2">No effect on expression of bacterial lipoprotein FTN_1103. Bacteria are as virulent in mice as wild-type bacteria.</text>
</comment>
<comment type="miscellaneous">
    <text evidence="5">Part of a type II CRISPR-Cas system.</text>
</comment>
<comment type="similarity">
    <text evidence="4">Belongs to the CRISPR-associated exonuclease Cas4 family.</text>
</comment>